<accession>B0XQ72</accession>
<evidence type="ECO:0000250" key="1">
    <source>
        <dbReference type="UniProtKB" id="P39940"/>
    </source>
</evidence>
<evidence type="ECO:0000250" key="2">
    <source>
        <dbReference type="UniProtKB" id="Q5BDP1"/>
    </source>
</evidence>
<evidence type="ECO:0000255" key="3">
    <source>
        <dbReference type="PROSITE-ProRule" id="PRU00041"/>
    </source>
</evidence>
<evidence type="ECO:0000255" key="4">
    <source>
        <dbReference type="PROSITE-ProRule" id="PRU00104"/>
    </source>
</evidence>
<evidence type="ECO:0000255" key="5">
    <source>
        <dbReference type="PROSITE-ProRule" id="PRU00224"/>
    </source>
</evidence>
<evidence type="ECO:0000256" key="6">
    <source>
        <dbReference type="SAM" id="MobiDB-lite"/>
    </source>
</evidence>
<evidence type="ECO:0000305" key="7"/>
<sequence length="813" mass="91969">MGSNLPAQPNLRLTTDGLYKRDVFRFPDPFAVATVGGEQTHTTSVIKKTLNPYWNEMFDLRVNEDSILAIQIFDQKKFKKKDQGFLGVINVRIGDVIDLQMGGDEMLTRDLKKSNDNLVVHGKLIINLSTNLSTPNTNQANGLHRSHVQSSTSSGLVPQVAPSSSHPAASGTAPVDPSASNPSLNPQRVPSTTRPSSTAAPASAAGAAVSNSHGSRTNLSSFEDSQGRLPAGWERREDNLGRTYYVDHNTRTTTWTRPSSNYNEHAQRSQREANMQLERRAHQSRMLPEDRTGANSPNLPESSQQAHTPPAGGSANAVSMMATGATTAGTGELPPGWEQRTTPEGRPYFVDHNTRTTTWVDPRRQQYIRMYGQNANGTNTTIQQQPVSQLGPLPSGWEMRLTNTARVYFVDHNTKTTTWDDPRLPSSLDQGVPQYKRDFRRKLIYFRSQPALRIMSGQCHVKVRRNNIFEDSYAEIMRQSASDLKKRLMIKFDGEDGLDYGGLSREFFFLLSHEMFNPFYCLFEYSAHDNYTLQINPHSGVNPEHLNYFKFIGRVVGLAIFHRRFLDSFFIGAFYKMMLRKKVSLQDMEGVDEDLHRNLTWTLDNDIEGVLELTFSVDDEKFGERRTIDLKPGGRDIPVTNENKAEYVELVTEWKIVKRVEEQFNAFMSGFNELIPADLVNVFDERELELLIGGIADIDVDDWKKHTDYRGYQESDEVIQNFWKIVRSWDAEQKSRLLQFTTGTSRIPVNGFKDLQGSDGPRRFTIEKSGDPAALPKSHTCFNRLDLPPYKSYETLEHKMSIAVEETLGFGQE</sequence>
<protein>
    <recommendedName>
        <fullName>Probable E3 ubiquitin-protein ligase hulA</fullName>
        <ecNumber>2.3.2.26</ecNumber>
    </recommendedName>
    <alternativeName>
        <fullName>HECT ubiquitin ligase A</fullName>
    </alternativeName>
    <alternativeName>
        <fullName>HECT-type E3 ubiquitin transferase hulA</fullName>
    </alternativeName>
</protein>
<keyword id="KW-0963">Cytoplasm</keyword>
<keyword id="KW-0677">Repeat</keyword>
<keyword id="KW-0808">Transferase</keyword>
<keyword id="KW-0833">Ubl conjugation pathway</keyword>
<proteinExistence type="inferred from homology"/>
<feature type="chain" id="PRO_0000395704" description="Probable E3 ubiquitin-protein ligase hulA">
    <location>
        <begin position="1"/>
        <end position="813"/>
    </location>
</feature>
<feature type="domain" description="C2" evidence="3">
    <location>
        <begin position="1"/>
        <end position="109"/>
    </location>
</feature>
<feature type="domain" description="WW 1" evidence="5">
    <location>
        <begin position="227"/>
        <end position="260"/>
    </location>
</feature>
<feature type="domain" description="WW 2" evidence="5">
    <location>
        <begin position="331"/>
        <end position="364"/>
    </location>
</feature>
<feature type="domain" description="WW 3" evidence="5">
    <location>
        <begin position="391"/>
        <end position="424"/>
    </location>
</feature>
<feature type="domain" description="HECT" evidence="4">
    <location>
        <begin position="480"/>
        <end position="813"/>
    </location>
</feature>
<feature type="region of interest" description="Disordered" evidence="6">
    <location>
        <begin position="131"/>
        <end position="235"/>
    </location>
</feature>
<feature type="region of interest" description="Disordered" evidence="6">
    <location>
        <begin position="251"/>
        <end position="351"/>
    </location>
</feature>
<feature type="compositionally biased region" description="Polar residues" evidence="6">
    <location>
        <begin position="148"/>
        <end position="167"/>
    </location>
</feature>
<feature type="compositionally biased region" description="Low complexity" evidence="6">
    <location>
        <begin position="188"/>
        <end position="215"/>
    </location>
</feature>
<feature type="compositionally biased region" description="Polar residues" evidence="6">
    <location>
        <begin position="251"/>
        <end position="264"/>
    </location>
</feature>
<feature type="compositionally biased region" description="Basic and acidic residues" evidence="6">
    <location>
        <begin position="265"/>
        <end position="292"/>
    </location>
</feature>
<feature type="compositionally biased region" description="Polar residues" evidence="6">
    <location>
        <begin position="293"/>
        <end position="307"/>
    </location>
</feature>
<feature type="compositionally biased region" description="Low complexity" evidence="6">
    <location>
        <begin position="322"/>
        <end position="331"/>
    </location>
</feature>
<feature type="active site" description="Glycyl thioester intermediate" evidence="4">
    <location>
        <position position="781"/>
    </location>
</feature>
<organism>
    <name type="scientific">Aspergillus fumigatus (strain CBS 144.89 / FGSC A1163 / CEA10)</name>
    <name type="common">Neosartorya fumigata</name>
    <dbReference type="NCBI Taxonomy" id="451804"/>
    <lineage>
        <taxon>Eukaryota</taxon>
        <taxon>Fungi</taxon>
        <taxon>Dikarya</taxon>
        <taxon>Ascomycota</taxon>
        <taxon>Pezizomycotina</taxon>
        <taxon>Eurotiomycetes</taxon>
        <taxon>Eurotiomycetidae</taxon>
        <taxon>Eurotiales</taxon>
        <taxon>Aspergillaceae</taxon>
        <taxon>Aspergillus</taxon>
        <taxon>Aspergillus subgen. Fumigati</taxon>
    </lineage>
</organism>
<name>RSP5_ASPFC</name>
<reference key="1">
    <citation type="journal article" date="2008" name="PLoS Genet.">
        <title>Genomic islands in the pathogenic filamentous fungus Aspergillus fumigatus.</title>
        <authorList>
            <person name="Fedorova N.D."/>
            <person name="Khaldi N."/>
            <person name="Joardar V.S."/>
            <person name="Maiti R."/>
            <person name="Amedeo P."/>
            <person name="Anderson M.J."/>
            <person name="Crabtree J."/>
            <person name="Silva J.C."/>
            <person name="Badger J.H."/>
            <person name="Albarraq A."/>
            <person name="Angiuoli S."/>
            <person name="Bussey H."/>
            <person name="Bowyer P."/>
            <person name="Cotty P.J."/>
            <person name="Dyer P.S."/>
            <person name="Egan A."/>
            <person name="Galens K."/>
            <person name="Fraser-Liggett C.M."/>
            <person name="Haas B.J."/>
            <person name="Inman J.M."/>
            <person name="Kent R."/>
            <person name="Lemieux S."/>
            <person name="Malavazi I."/>
            <person name="Orvis J."/>
            <person name="Roemer T."/>
            <person name="Ronning C.M."/>
            <person name="Sundaram J.P."/>
            <person name="Sutton G."/>
            <person name="Turner G."/>
            <person name="Venter J.C."/>
            <person name="White O.R."/>
            <person name="Whitty B.R."/>
            <person name="Youngman P."/>
            <person name="Wolfe K.H."/>
            <person name="Goldman G.H."/>
            <person name="Wortman J.R."/>
            <person name="Jiang B."/>
            <person name="Denning D.W."/>
            <person name="Nierman W.C."/>
        </authorList>
    </citation>
    <scope>NUCLEOTIDE SEQUENCE [LARGE SCALE GENOMIC DNA]</scope>
    <source>
        <strain>CBS 144.89 / FGSC A1163 / CEA10</strain>
    </source>
</reference>
<comment type="function">
    <text evidence="2">E3 ubiquitin-protein ligase which accepts ubiquitin from an E2 ubiquitin-conjugating enzyme in the form of a thioester and then directly transfers the ubiquitin to targeted substrates. Probably involved in the regulatory network controlling carbon source utilization.</text>
</comment>
<comment type="catalytic activity">
    <reaction>
        <text>S-ubiquitinyl-[E2 ubiquitin-conjugating enzyme]-L-cysteine + [acceptor protein]-L-lysine = [E2 ubiquitin-conjugating enzyme]-L-cysteine + N(6)-ubiquitinyl-[acceptor protein]-L-lysine.</text>
        <dbReference type="EC" id="2.3.2.26"/>
    </reaction>
</comment>
<comment type="pathway">
    <text>Protein modification; protein ubiquitination.</text>
</comment>
<comment type="subunit">
    <text evidence="2">Interacts with creD.</text>
</comment>
<comment type="subcellular location">
    <subcellularLocation>
        <location evidence="1">Cytoplasm</location>
    </subcellularLocation>
</comment>
<comment type="similarity">
    <text evidence="7">Belongs to the RSP5/NEDD4 family.</text>
</comment>
<comment type="sequence caution" evidence="7">
    <conflict type="erroneous gene model prediction">
        <sequence resource="EMBL-CDS" id="EDP56186"/>
    </conflict>
</comment>
<gene>
    <name type="primary">hulA</name>
    <name type="ORF">AFUB_008950</name>
</gene>
<dbReference type="EC" id="2.3.2.26"/>
<dbReference type="EMBL" id="DS499594">
    <property type="protein sequence ID" value="EDP56186.1"/>
    <property type="status" value="ALT_SEQ"/>
    <property type="molecule type" value="Genomic_DNA"/>
</dbReference>
<dbReference type="SMR" id="B0XQ72"/>
<dbReference type="OrthoDB" id="71186at5052"/>
<dbReference type="PhylomeDB" id="B0XQ72"/>
<dbReference type="UniPathway" id="UPA00143"/>
<dbReference type="Proteomes" id="UP000001699">
    <property type="component" value="Unassembled WGS sequence"/>
</dbReference>
<dbReference type="GO" id="GO:0005737">
    <property type="term" value="C:cytoplasm"/>
    <property type="evidence" value="ECO:0007669"/>
    <property type="project" value="UniProtKB-SubCell"/>
</dbReference>
<dbReference type="GO" id="GO:0061630">
    <property type="term" value="F:ubiquitin protein ligase activity"/>
    <property type="evidence" value="ECO:0007669"/>
    <property type="project" value="InterPro"/>
</dbReference>
<dbReference type="GO" id="GO:0004842">
    <property type="term" value="F:ubiquitin-protein transferase activity"/>
    <property type="evidence" value="ECO:0000250"/>
    <property type="project" value="UniProtKB"/>
</dbReference>
<dbReference type="GO" id="GO:0043328">
    <property type="term" value="P:protein transport to vacuole involved in ubiquitin-dependent protein catabolic process via the multivesicular body sorting pathway"/>
    <property type="evidence" value="ECO:0000250"/>
    <property type="project" value="UniProtKB"/>
</dbReference>
<dbReference type="GO" id="GO:0016567">
    <property type="term" value="P:protein ubiquitination"/>
    <property type="evidence" value="ECO:0000250"/>
    <property type="project" value="UniProtKB"/>
</dbReference>
<dbReference type="CDD" id="cd08382">
    <property type="entry name" value="C2_Smurf-like"/>
    <property type="match status" value="1"/>
</dbReference>
<dbReference type="CDD" id="cd00078">
    <property type="entry name" value="HECTc"/>
    <property type="match status" value="1"/>
</dbReference>
<dbReference type="CDD" id="cd00201">
    <property type="entry name" value="WW"/>
    <property type="match status" value="3"/>
</dbReference>
<dbReference type="FunFam" id="2.20.70.10:FF:000011">
    <property type="entry name" value="E3 ubiquitin-protein ligase"/>
    <property type="match status" value="1"/>
</dbReference>
<dbReference type="FunFam" id="2.20.70.10:FF:000017">
    <property type="entry name" value="E3 ubiquitin-protein ligase"/>
    <property type="match status" value="1"/>
</dbReference>
<dbReference type="FunFam" id="2.20.70.10:FF:000053">
    <property type="entry name" value="E3 ubiquitin-protein ligase"/>
    <property type="match status" value="1"/>
</dbReference>
<dbReference type="FunFam" id="2.60.40.150:FF:000074">
    <property type="entry name" value="E3 ubiquitin-protein ligase"/>
    <property type="match status" value="1"/>
</dbReference>
<dbReference type="FunFam" id="3.90.1750.10:FF:000005">
    <property type="entry name" value="E3 ubiquitin-protein ligase"/>
    <property type="match status" value="1"/>
</dbReference>
<dbReference type="FunFam" id="3.30.2160.10:FF:000001">
    <property type="entry name" value="E3 ubiquitin-protein ligase NEDD4-like"/>
    <property type="match status" value="1"/>
</dbReference>
<dbReference type="FunFam" id="3.30.2410.10:FF:000001">
    <property type="entry name" value="E3 ubiquitin-protein ligase NEDD4-like"/>
    <property type="match status" value="1"/>
</dbReference>
<dbReference type="Gene3D" id="2.20.70.10">
    <property type="match status" value="2"/>
</dbReference>
<dbReference type="Gene3D" id="2.60.40.150">
    <property type="entry name" value="C2 domain"/>
    <property type="match status" value="1"/>
</dbReference>
<dbReference type="Gene3D" id="3.30.2160.10">
    <property type="entry name" value="Hect, E3 ligase catalytic domain"/>
    <property type="match status" value="1"/>
</dbReference>
<dbReference type="Gene3D" id="3.30.2410.10">
    <property type="entry name" value="Hect, E3 ligase catalytic domain"/>
    <property type="match status" value="1"/>
</dbReference>
<dbReference type="Gene3D" id="3.90.1750.10">
    <property type="entry name" value="Hect, E3 ligase catalytic domains"/>
    <property type="match status" value="1"/>
</dbReference>
<dbReference type="InterPro" id="IPR000008">
    <property type="entry name" value="C2_dom"/>
</dbReference>
<dbReference type="InterPro" id="IPR035892">
    <property type="entry name" value="C2_domain_sf"/>
</dbReference>
<dbReference type="InterPro" id="IPR024928">
    <property type="entry name" value="E3_ub_ligase_SMURF1"/>
</dbReference>
<dbReference type="InterPro" id="IPR050409">
    <property type="entry name" value="E3_ubiq-protein_ligase"/>
</dbReference>
<dbReference type="InterPro" id="IPR000569">
    <property type="entry name" value="HECT_dom"/>
</dbReference>
<dbReference type="InterPro" id="IPR035983">
    <property type="entry name" value="Hect_E3_ubiquitin_ligase"/>
</dbReference>
<dbReference type="InterPro" id="IPR001202">
    <property type="entry name" value="WW_dom"/>
</dbReference>
<dbReference type="InterPro" id="IPR036020">
    <property type="entry name" value="WW_dom_sf"/>
</dbReference>
<dbReference type="PANTHER" id="PTHR11254:SF440">
    <property type="entry name" value="E3 UBIQUITIN-PROTEIN LIGASE NEDD-4"/>
    <property type="match status" value="1"/>
</dbReference>
<dbReference type="PANTHER" id="PTHR11254">
    <property type="entry name" value="HECT DOMAIN UBIQUITIN-PROTEIN LIGASE"/>
    <property type="match status" value="1"/>
</dbReference>
<dbReference type="Pfam" id="PF00168">
    <property type="entry name" value="C2"/>
    <property type="match status" value="1"/>
</dbReference>
<dbReference type="Pfam" id="PF00632">
    <property type="entry name" value="HECT"/>
    <property type="match status" value="1"/>
</dbReference>
<dbReference type="Pfam" id="PF00397">
    <property type="entry name" value="WW"/>
    <property type="match status" value="3"/>
</dbReference>
<dbReference type="PIRSF" id="PIRSF001569">
    <property type="entry name" value="E3_ub_ligase_SMURF1"/>
    <property type="match status" value="1"/>
</dbReference>
<dbReference type="SMART" id="SM00239">
    <property type="entry name" value="C2"/>
    <property type="match status" value="1"/>
</dbReference>
<dbReference type="SMART" id="SM00119">
    <property type="entry name" value="HECTc"/>
    <property type="match status" value="1"/>
</dbReference>
<dbReference type="SMART" id="SM00456">
    <property type="entry name" value="WW"/>
    <property type="match status" value="3"/>
</dbReference>
<dbReference type="SUPFAM" id="SSF49562">
    <property type="entry name" value="C2 domain (Calcium/lipid-binding domain, CaLB)"/>
    <property type="match status" value="1"/>
</dbReference>
<dbReference type="SUPFAM" id="SSF56204">
    <property type="entry name" value="Hect, E3 ligase catalytic domain"/>
    <property type="match status" value="1"/>
</dbReference>
<dbReference type="SUPFAM" id="SSF51045">
    <property type="entry name" value="WW domain"/>
    <property type="match status" value="3"/>
</dbReference>
<dbReference type="PROSITE" id="PS50004">
    <property type="entry name" value="C2"/>
    <property type="match status" value="1"/>
</dbReference>
<dbReference type="PROSITE" id="PS50237">
    <property type="entry name" value="HECT"/>
    <property type="match status" value="1"/>
</dbReference>
<dbReference type="PROSITE" id="PS01159">
    <property type="entry name" value="WW_DOMAIN_1"/>
    <property type="match status" value="3"/>
</dbReference>
<dbReference type="PROSITE" id="PS50020">
    <property type="entry name" value="WW_DOMAIN_2"/>
    <property type="match status" value="3"/>
</dbReference>